<protein>
    <recommendedName>
        <fullName evidence="1">3-deoxy-manno-octulosonate cytidylyltransferase</fullName>
        <ecNumber evidence="1">2.7.7.38</ecNumber>
    </recommendedName>
    <alternativeName>
        <fullName evidence="1">CMP-2-keto-3-deoxyoctulosonic acid synthase</fullName>
        <shortName evidence="1">CKS</shortName>
        <shortName evidence="1">CMP-KDO synthase</shortName>
    </alternativeName>
</protein>
<evidence type="ECO:0000255" key="1">
    <source>
        <dbReference type="HAMAP-Rule" id="MF_00057"/>
    </source>
</evidence>
<proteinExistence type="inferred from homology"/>
<sequence length="250" mass="27336">MSFIAIIPARYASTRLPGKPLADIAGKPMVVHVMERALASGADRVIVATDHPDVVKAVEAAGGEVCLTRADHQSGTERLAEVIEHYGFADDDIIVNVQGDEPLVPPVIIRQVADNLAACSAGMATLAVPIASSEEAFNPNAVKVVMDAQGYALYFSRATIPWERERFAQSKETIGDCFLRHIGIYAYRAGFIRRYVNWAPSQLEQIELLEQLRVLWYGEKIHVAVAKAVPAVGVDTQSDLDRVRAIMLNQ</sequence>
<reference key="1">
    <citation type="journal article" date="2004" name="Proc. Natl. Acad. Sci. U.S.A.">
        <title>Insights into the evolution of Yersinia pestis through whole-genome comparison with Yersinia pseudotuberculosis.</title>
        <authorList>
            <person name="Chain P.S.G."/>
            <person name="Carniel E."/>
            <person name="Larimer F.W."/>
            <person name="Lamerdin J."/>
            <person name="Stoutland P.O."/>
            <person name="Regala W.M."/>
            <person name="Georgescu A.M."/>
            <person name="Vergez L.M."/>
            <person name="Land M.L."/>
            <person name="Motin V.L."/>
            <person name="Brubaker R.R."/>
            <person name="Fowler J."/>
            <person name="Hinnebusch J."/>
            <person name="Marceau M."/>
            <person name="Medigue C."/>
            <person name="Simonet M."/>
            <person name="Chenal-Francisque V."/>
            <person name="Souza B."/>
            <person name="Dacheux D."/>
            <person name="Elliott J.M."/>
            <person name="Derbise A."/>
            <person name="Hauser L.J."/>
            <person name="Garcia E."/>
        </authorList>
    </citation>
    <scope>NUCLEOTIDE SEQUENCE [LARGE SCALE GENOMIC DNA]</scope>
    <source>
        <strain>IP32953</strain>
    </source>
</reference>
<organism>
    <name type="scientific">Yersinia pseudotuberculosis serotype I (strain IP32953)</name>
    <dbReference type="NCBI Taxonomy" id="273123"/>
    <lineage>
        <taxon>Bacteria</taxon>
        <taxon>Pseudomonadati</taxon>
        <taxon>Pseudomonadota</taxon>
        <taxon>Gammaproteobacteria</taxon>
        <taxon>Enterobacterales</taxon>
        <taxon>Yersiniaceae</taxon>
        <taxon>Yersinia</taxon>
    </lineage>
</organism>
<feature type="chain" id="PRO_1000003394" description="3-deoxy-manno-octulosonate cytidylyltransferase">
    <location>
        <begin position="1"/>
        <end position="250"/>
    </location>
</feature>
<name>KDSB_YERPS</name>
<accession>Q66CH8</accession>
<keyword id="KW-0963">Cytoplasm</keyword>
<keyword id="KW-0448">Lipopolysaccharide biosynthesis</keyword>
<keyword id="KW-0548">Nucleotidyltransferase</keyword>
<keyword id="KW-0808">Transferase</keyword>
<gene>
    <name evidence="1" type="primary">kdsB</name>
    <name type="ordered locus">YPTB1425</name>
</gene>
<comment type="function">
    <text evidence="1">Activates KDO (a required 8-carbon sugar) for incorporation into bacterial lipopolysaccharide in Gram-negative bacteria.</text>
</comment>
<comment type="catalytic activity">
    <reaction evidence="1">
        <text>3-deoxy-alpha-D-manno-oct-2-ulosonate + CTP = CMP-3-deoxy-beta-D-manno-octulosonate + diphosphate</text>
        <dbReference type="Rhea" id="RHEA:23448"/>
        <dbReference type="ChEBI" id="CHEBI:33019"/>
        <dbReference type="ChEBI" id="CHEBI:37563"/>
        <dbReference type="ChEBI" id="CHEBI:85986"/>
        <dbReference type="ChEBI" id="CHEBI:85987"/>
        <dbReference type="EC" id="2.7.7.38"/>
    </reaction>
</comment>
<comment type="pathway">
    <text evidence="1">Nucleotide-sugar biosynthesis; CMP-3-deoxy-D-manno-octulosonate biosynthesis; CMP-3-deoxy-D-manno-octulosonate from 3-deoxy-D-manno-octulosonate and CTP: step 1/1.</text>
</comment>
<comment type="pathway">
    <text evidence="1">Bacterial outer membrane biogenesis; lipopolysaccharide biosynthesis.</text>
</comment>
<comment type="subcellular location">
    <subcellularLocation>
        <location evidence="1">Cytoplasm</location>
    </subcellularLocation>
</comment>
<comment type="similarity">
    <text evidence="1">Belongs to the KdsB family.</text>
</comment>
<dbReference type="EC" id="2.7.7.38" evidence="1"/>
<dbReference type="EMBL" id="BX936398">
    <property type="protein sequence ID" value="CAH20665.1"/>
    <property type="molecule type" value="Genomic_DNA"/>
</dbReference>
<dbReference type="RefSeq" id="WP_002211314.1">
    <property type="nucleotide sequence ID" value="NZ_CP009712.1"/>
</dbReference>
<dbReference type="SMR" id="Q66CH8"/>
<dbReference type="GeneID" id="57977196"/>
<dbReference type="KEGG" id="ypo:BZ17_1092"/>
<dbReference type="KEGG" id="yps:YPTB1425"/>
<dbReference type="PATRIC" id="fig|273123.14.peg.1159"/>
<dbReference type="UniPathway" id="UPA00030"/>
<dbReference type="UniPathway" id="UPA00358">
    <property type="reaction ID" value="UER00476"/>
</dbReference>
<dbReference type="Proteomes" id="UP000001011">
    <property type="component" value="Chromosome"/>
</dbReference>
<dbReference type="GO" id="GO:0005829">
    <property type="term" value="C:cytosol"/>
    <property type="evidence" value="ECO:0007669"/>
    <property type="project" value="TreeGrafter"/>
</dbReference>
<dbReference type="GO" id="GO:0008690">
    <property type="term" value="F:3-deoxy-manno-octulosonate cytidylyltransferase activity"/>
    <property type="evidence" value="ECO:0007669"/>
    <property type="project" value="UniProtKB-UniRule"/>
</dbReference>
<dbReference type="GO" id="GO:0033468">
    <property type="term" value="P:CMP-keto-3-deoxy-D-manno-octulosonic acid biosynthetic process"/>
    <property type="evidence" value="ECO:0007669"/>
    <property type="project" value="UniProtKB-UniRule"/>
</dbReference>
<dbReference type="GO" id="GO:0009103">
    <property type="term" value="P:lipopolysaccharide biosynthetic process"/>
    <property type="evidence" value="ECO:0007669"/>
    <property type="project" value="UniProtKB-UniRule"/>
</dbReference>
<dbReference type="CDD" id="cd02517">
    <property type="entry name" value="CMP-KDO-Synthetase"/>
    <property type="match status" value="1"/>
</dbReference>
<dbReference type="FunFam" id="3.90.550.10:FF:000011">
    <property type="entry name" value="3-deoxy-manno-octulosonate cytidylyltransferase"/>
    <property type="match status" value="1"/>
</dbReference>
<dbReference type="Gene3D" id="3.90.550.10">
    <property type="entry name" value="Spore Coat Polysaccharide Biosynthesis Protein SpsA, Chain A"/>
    <property type="match status" value="1"/>
</dbReference>
<dbReference type="HAMAP" id="MF_00057">
    <property type="entry name" value="KdsB"/>
    <property type="match status" value="1"/>
</dbReference>
<dbReference type="InterPro" id="IPR003329">
    <property type="entry name" value="Cytidylyl_trans"/>
</dbReference>
<dbReference type="InterPro" id="IPR004528">
    <property type="entry name" value="KdsB"/>
</dbReference>
<dbReference type="InterPro" id="IPR029044">
    <property type="entry name" value="Nucleotide-diphossugar_trans"/>
</dbReference>
<dbReference type="NCBIfam" id="TIGR00466">
    <property type="entry name" value="kdsB"/>
    <property type="match status" value="1"/>
</dbReference>
<dbReference type="NCBIfam" id="NF003950">
    <property type="entry name" value="PRK05450.1-3"/>
    <property type="match status" value="1"/>
</dbReference>
<dbReference type="NCBIfam" id="NF003952">
    <property type="entry name" value="PRK05450.1-5"/>
    <property type="match status" value="1"/>
</dbReference>
<dbReference type="NCBIfam" id="NF009905">
    <property type="entry name" value="PRK13368.1"/>
    <property type="match status" value="1"/>
</dbReference>
<dbReference type="PANTHER" id="PTHR42866">
    <property type="entry name" value="3-DEOXY-MANNO-OCTULOSONATE CYTIDYLYLTRANSFERASE"/>
    <property type="match status" value="1"/>
</dbReference>
<dbReference type="PANTHER" id="PTHR42866:SF2">
    <property type="entry name" value="3-DEOXY-MANNO-OCTULOSONATE CYTIDYLYLTRANSFERASE, MITOCHONDRIAL"/>
    <property type="match status" value="1"/>
</dbReference>
<dbReference type="Pfam" id="PF02348">
    <property type="entry name" value="CTP_transf_3"/>
    <property type="match status" value="1"/>
</dbReference>
<dbReference type="SUPFAM" id="SSF53448">
    <property type="entry name" value="Nucleotide-diphospho-sugar transferases"/>
    <property type="match status" value="1"/>
</dbReference>